<evidence type="ECO:0000250" key="1"/>
<evidence type="ECO:0000250" key="2">
    <source>
        <dbReference type="UniProtKB" id="Q28641"/>
    </source>
</evidence>
<evidence type="ECO:0000250" key="3">
    <source>
        <dbReference type="UniProtKB" id="Q29RW1"/>
    </source>
</evidence>
<evidence type="ECO:0000255" key="4"/>
<evidence type="ECO:0000255" key="5">
    <source>
        <dbReference type="PROSITE-ProRule" id="PRU00116"/>
    </source>
</evidence>
<evidence type="ECO:0000255" key="6">
    <source>
        <dbReference type="PROSITE-ProRule" id="PRU00782"/>
    </source>
</evidence>
<evidence type="ECO:0000255" key="7">
    <source>
        <dbReference type="PROSITE-ProRule" id="PRU01190"/>
    </source>
</evidence>
<evidence type="ECO:0000256" key="8">
    <source>
        <dbReference type="SAM" id="MobiDB-lite"/>
    </source>
</evidence>
<evidence type="ECO:0000269" key="9">
    <source>
    </source>
</evidence>
<evidence type="ECO:0000305" key="10"/>
<comment type="function">
    <text>Muscle contraction.</text>
</comment>
<comment type="subunit">
    <text>Muscle myosin is a hexameric protein that consists of 2 heavy chain subunits (MHC), 2 alkali light chain subunits (MLC) and 2 regulatory light chain subunits (MLC-2).</text>
</comment>
<comment type="subcellular location">
    <subcellularLocation>
        <location evidence="9">Cytoplasm</location>
        <location evidence="9">Myofibril</location>
    </subcellularLocation>
    <text>Thick filaments of the myofibrils.</text>
</comment>
<comment type="tissue specificity">
    <text evidence="9">Expressed in type 2b myofibers in the tibialis anterior muscle (at protein level).</text>
</comment>
<comment type="domain">
    <text>The rodlike tail sequence is highly repetitive, showing cycles of a 28-residue repeat pattern composed of 4 heptapeptides, characteristic for alpha-helical coiled coils.</text>
</comment>
<comment type="domain">
    <text evidence="10">Limited proteolysis of myosin heavy chain produces 1 light meromyosin (LMM) and 1 heavy meromyosin (HMM). HMM can be further cleaved into 2 globular subfragments (S1) and 1 rod-shaped subfragment (S2).</text>
</comment>
<comment type="similarity">
    <text evidence="10">Belongs to the TRAFAC class myosin-kinesin ATPase superfamily. Myosin family.</text>
</comment>
<comment type="caution">
    <text evidence="10">Represents a conventional myosin. This protein should not be confused with the unconventional myosin-4 (MYO4).</text>
</comment>
<proteinExistence type="evidence at protein level"/>
<sequence>MSSDAEMAVFGEAAPYLRKSEKERIEAQNKPFDAKSSVFVVDAKESYVKATVQSREGGKVTAKTEGGATVTVKDDQVFSMNPPKYDKIEDMAMMTHLHEPAVLYNLKERYAAWMIYTYSGLFCVTVNPYKWLPVYNPEVVAAYRGKKRQEAPPHIFSISDNAYQFMLTDRENQSILITGESGAGKTVNTKRVIQYFATIAVTGDKKKEEATSGKMQGTLEDQIISANPLLEAFGNAKTVRNDNSSRFGKFIRIHFGATGKLASADIETYLLEKSRVTFQLKAERSYHIFYQIMSNKKPELIEMLLITTNPYDFAYVSQGEITVPSIDDQEELMATDTAVDILGFSADEKVAIYKLTGAVMHYGNMKFKQKQREEQAEPDGTEVADKAAYLTSLNSADLLKALCYPRVKVGNEYVTKGQTVQQVYNSVGALAKSMYEKMFLWMVTRINQQLDTKQPRQYFIGVLDIAGFEIFDFNTLEQLCINFTNEKLQQFFNHHMFVLEQEEYKKEGIDWEFIDFGMDLAACIELIEKPMGIFSILEEECMFPKATDTSFKNKLYEQHLGKSNNFQKPKPAKGKAEAHFSLVHYAGTVDYNIIGWLDKNKDPLNETVVGLYQKSGLKTLAFLFSGGQAAEAEGGGGKKGGKKKGSSFQTVSALFRENLNKLMTNLKSTHPHFVRCLIPNETKTPGAMEHELVLHQLRCNGVLEGIRICRKGFPSRILYADFKQRYKVLNASAIPEGQFIDSKKASEKLLGSIDIDHTQYKFGHTKVFFKAGLLGTLEEMRDEKLAQLITRTQAVCRGYLMRVEFKKMMERRESIFCIQYNVRAFMNVKHWPWMKLYFKIKPLLKSAETEKEMANMKEDFEKAKEDLAKSEAKRKELEEKMVALMQEKNDLQLQVQAEADGLADAEERCDQLIKTKIQLEAKIKELTERAEDEEEINAELTAKKRKLEDECSELKKDIDDLELTLAKVEKEKHATENKVKNLTEEMAGLDENIAKLTKEKKALQEAHQQTLDDLQAEEDKVNTLTKAKTKLEQQVDDLEGSLEQEKKLRMDLERAKRKLEGDLKLAQESTMDIENDKQQLDEKLKKKEFEMSNLQSKIEDEQALGMQLQKKIKELQARIEELEEEIEAERASRAKAEKQRSDLSRELEEISERLEEAGGATSAQIEMNKKREAEFQKMRRDLEEATLQHEATAAALRKKHADSVAELGEQIDNLQRVKQKLEKEKSELKMEIDDLASNMETVSKAKGNLEKMCRTLEDQLSEVKTKEEEQQRLINELSTQKARLHTESGEFSRQLDEKDAMVSQLSRGKQAFTQQIEELKRQLEEESKAKNALAHALQSARHDCDLLREQYEEEQEAKAELQRAMSKANSEVAQWRTKYETDAIQRTEELEEAKKKLAQRLQDAEEHVEAVNSKCASLEKTKQRLQNEVEDLMIDVERSNAACAALDKKQRNFDKVLAEWKQKYEETQAELEASQKESRSLSTELFKVKNAYEESLDQLETLKRENKNLQQEISDLTEQIAEGGKHIHELEKIKKQIDQEKSELQASLEEAEASLEHEEGKILRIQLELNQVKSEIDRKIAEKDEEIDQLKRNHLRVVESMQSTLDAEIRSRNDALRIKKKMEGDLNEMEIQLNHANRQAAEAIRNLRNTQGMLKDTQLHLDDALRGQDDLKEQLAMVERRANLMQAEIEELRASLEQTERSRRVAEQELLDASERVQLLHTQNTSLINTKKKLETDISQIQGEMEDIVQEARNAEEKAKKAITDAAMMAEELKKEQDTSAHLERMKKNMEQTVKDLQHRLDEAEQLALKGGKKQIQKLEARVRELENEVENEQKRNIEAVKGLRKHERRVKELTYQTEEDRKNVLRLQDLVDKLQTKVKAYKRQAEEAEEQSNVNLAKFRKIQHELEEAEERADIAESQVNKLRVKSREVHTKVISEE</sequence>
<keyword id="KW-0002">3D-structure</keyword>
<keyword id="KW-0009">Actin-binding</keyword>
<keyword id="KW-0067">ATP-binding</keyword>
<keyword id="KW-0112">Calmodulin-binding</keyword>
<keyword id="KW-0175">Coiled coil</keyword>
<keyword id="KW-0963">Cytoplasm</keyword>
<keyword id="KW-0488">Methylation</keyword>
<keyword id="KW-0505">Motor protein</keyword>
<keyword id="KW-0514">Muscle protein</keyword>
<keyword id="KW-0518">Myosin</keyword>
<keyword id="KW-0547">Nucleotide-binding</keyword>
<keyword id="KW-0597">Phosphoprotein</keyword>
<keyword id="KW-1185">Reference proteome</keyword>
<keyword id="KW-0787">Thick filament</keyword>
<protein>
    <recommendedName>
        <fullName>Myosin-4</fullName>
    </recommendedName>
    <alternativeName>
        <fullName>Myosin heavy chain 2b</fullName>
        <shortName>MyHC-2b</shortName>
    </alternativeName>
    <alternativeName>
        <fullName>Myosin heavy chain 4</fullName>
    </alternativeName>
</protein>
<gene>
    <name type="primary">Myh4</name>
</gene>
<accession>Q5SX39</accession>
<accession>B9EJ73</accession>
<organism>
    <name type="scientific">Mus musculus</name>
    <name type="common">Mouse</name>
    <dbReference type="NCBI Taxonomy" id="10090"/>
    <lineage>
        <taxon>Eukaryota</taxon>
        <taxon>Metazoa</taxon>
        <taxon>Chordata</taxon>
        <taxon>Craniata</taxon>
        <taxon>Vertebrata</taxon>
        <taxon>Euteleostomi</taxon>
        <taxon>Mammalia</taxon>
        <taxon>Eutheria</taxon>
        <taxon>Euarchontoglires</taxon>
        <taxon>Glires</taxon>
        <taxon>Rodentia</taxon>
        <taxon>Myomorpha</taxon>
        <taxon>Muroidea</taxon>
        <taxon>Muridae</taxon>
        <taxon>Murinae</taxon>
        <taxon>Mus</taxon>
        <taxon>Mus</taxon>
    </lineage>
</organism>
<reference key="1">
    <citation type="journal article" date="2009" name="PLoS Biol.">
        <title>Lineage-specific biology revealed by a finished genome assembly of the mouse.</title>
        <authorList>
            <person name="Church D.M."/>
            <person name="Goodstadt L."/>
            <person name="Hillier L.W."/>
            <person name="Zody M.C."/>
            <person name="Goldstein S."/>
            <person name="She X."/>
            <person name="Bult C.J."/>
            <person name="Agarwala R."/>
            <person name="Cherry J.L."/>
            <person name="DiCuccio M."/>
            <person name="Hlavina W."/>
            <person name="Kapustin Y."/>
            <person name="Meric P."/>
            <person name="Maglott D."/>
            <person name="Birtle Z."/>
            <person name="Marques A.C."/>
            <person name="Graves T."/>
            <person name="Zhou S."/>
            <person name="Teague B."/>
            <person name="Potamousis K."/>
            <person name="Churas C."/>
            <person name="Place M."/>
            <person name="Herschleb J."/>
            <person name="Runnheim R."/>
            <person name="Forrest D."/>
            <person name="Amos-Landgraf J."/>
            <person name="Schwartz D.C."/>
            <person name="Cheng Z."/>
            <person name="Lindblad-Toh K."/>
            <person name="Eichler E.E."/>
            <person name="Ponting C.P."/>
        </authorList>
    </citation>
    <scope>NUCLEOTIDE SEQUENCE [LARGE SCALE GENOMIC DNA]</scope>
    <source>
        <strain>C57BL/6J</strain>
    </source>
</reference>
<reference key="2">
    <citation type="journal article" date="2004" name="Genome Res.">
        <title>The status, quality, and expansion of the NIH full-length cDNA project: the Mammalian Gene Collection (MGC).</title>
        <authorList>
            <consortium name="The MGC Project Team"/>
        </authorList>
    </citation>
    <scope>NUCLEOTIDE SEQUENCE [LARGE SCALE MRNA]</scope>
    <source>
        <tissue>Brain</tissue>
    </source>
</reference>
<reference key="3">
    <citation type="journal article" date="2017" name="Bio. Protoc.">
        <title>Muscle Histology Characterization Using H&amp;E Staining and Muscle Fiber Type Classification Using Immunofluorescence Staining.</title>
        <authorList>
            <person name="Wang C."/>
            <person name="Yue F."/>
            <person name="Kuang S."/>
        </authorList>
    </citation>
    <scope>SUBCELLULAR LOCATION</scope>
    <scope>TISSUE SPECIFICITY</scope>
</reference>
<dbReference type="EMBL" id="AL596129">
    <property type="status" value="NOT_ANNOTATED_CDS"/>
    <property type="molecule type" value="Genomic_DNA"/>
</dbReference>
<dbReference type="EMBL" id="BC141362">
    <property type="protein sequence ID" value="AAI41363.1"/>
    <property type="molecule type" value="mRNA"/>
</dbReference>
<dbReference type="CCDS" id="CCDS24856.1"/>
<dbReference type="RefSeq" id="NP_034985.2">
    <property type="nucleotide sequence ID" value="NM_010855.3"/>
</dbReference>
<dbReference type="PDB" id="7NEP">
    <property type="method" value="EM"/>
    <property type="resolution" value="10.20 A"/>
    <property type="chains" value="L/M=32-844"/>
</dbReference>
<dbReference type="PDB" id="7QIN">
    <property type="method" value="EM"/>
    <property type="resolution" value="6.60 A"/>
    <property type="chains" value="L/M=1-848"/>
</dbReference>
<dbReference type="PDB" id="7QIO">
    <property type="method" value="EM"/>
    <property type="resolution" value="9.00 A"/>
    <property type="chains" value="L/M=1-848"/>
</dbReference>
<dbReference type="PDBsum" id="7NEP"/>
<dbReference type="PDBsum" id="7QIN"/>
<dbReference type="PDBsum" id="7QIO"/>
<dbReference type="EMDB" id="EMD-12289"/>
<dbReference type="EMDB" id="EMD-13991"/>
<dbReference type="EMDB" id="EMD-13993"/>
<dbReference type="SMR" id="Q5SX39"/>
<dbReference type="BioGRID" id="201648">
    <property type="interactions" value="7"/>
</dbReference>
<dbReference type="FunCoup" id="Q5SX39">
    <property type="interactions" value="137"/>
</dbReference>
<dbReference type="STRING" id="10090.ENSMUSP00000018632"/>
<dbReference type="GlyGen" id="Q5SX39">
    <property type="glycosylation" value="1 site, 1 O-linked glycan (1 site)"/>
</dbReference>
<dbReference type="iPTMnet" id="Q5SX39"/>
<dbReference type="PhosphoSitePlus" id="Q5SX39"/>
<dbReference type="SwissPalm" id="Q5SX39"/>
<dbReference type="jPOST" id="Q5SX39"/>
<dbReference type="PaxDb" id="10090-ENSMUSP00000018632"/>
<dbReference type="PeptideAtlas" id="Q5SX39"/>
<dbReference type="ProteomicsDB" id="293595"/>
<dbReference type="Pumba" id="Q5SX39"/>
<dbReference type="ABCD" id="Q5SX39">
    <property type="antibodies" value="1 sequenced antibody"/>
</dbReference>
<dbReference type="DNASU" id="17884"/>
<dbReference type="Ensembl" id="ENSMUST00000018632.11">
    <property type="protein sequence ID" value="ENSMUSP00000018632.5"/>
    <property type="gene ID" value="ENSMUSG00000057003.13"/>
</dbReference>
<dbReference type="Ensembl" id="ENSMUST00000170942.2">
    <property type="protein sequence ID" value="ENSMUSP00000127514.2"/>
    <property type="gene ID" value="ENSMUSG00000057003.13"/>
</dbReference>
<dbReference type="GeneID" id="17884"/>
<dbReference type="KEGG" id="mmu:17884"/>
<dbReference type="UCSC" id="uc007jmj.2">
    <property type="organism name" value="mouse"/>
</dbReference>
<dbReference type="AGR" id="MGI:1339713"/>
<dbReference type="CTD" id="4622"/>
<dbReference type="MGI" id="MGI:1339713">
    <property type="gene designation" value="Myh4"/>
</dbReference>
<dbReference type="VEuPathDB" id="HostDB:ENSMUSG00000057003"/>
<dbReference type="eggNOG" id="KOG0161">
    <property type="taxonomic scope" value="Eukaryota"/>
</dbReference>
<dbReference type="GeneTree" id="ENSGT00940000163646"/>
<dbReference type="HOGENOM" id="CLU_000192_8_1_1"/>
<dbReference type="InParanoid" id="Q5SX39"/>
<dbReference type="OMA" id="APTGKMQ"/>
<dbReference type="OrthoDB" id="312459at2759"/>
<dbReference type="PhylomeDB" id="Q5SX39"/>
<dbReference type="TreeFam" id="TF314375"/>
<dbReference type="BioGRID-ORCS" id="17884">
    <property type="hits" value="3 hits in 78 CRISPR screens"/>
</dbReference>
<dbReference type="PRO" id="PR:Q5SX39"/>
<dbReference type="Proteomes" id="UP000000589">
    <property type="component" value="Chromosome 11"/>
</dbReference>
<dbReference type="RNAct" id="Q5SX39">
    <property type="molecule type" value="protein"/>
</dbReference>
<dbReference type="Bgee" id="ENSMUSG00000057003">
    <property type="expression patterns" value="Expressed in extensor digitorum longus and 93 other cell types or tissues"/>
</dbReference>
<dbReference type="GO" id="GO:0005859">
    <property type="term" value="C:muscle myosin complex"/>
    <property type="evidence" value="ECO:0007669"/>
    <property type="project" value="Ensembl"/>
</dbReference>
<dbReference type="GO" id="GO:0030016">
    <property type="term" value="C:myofibril"/>
    <property type="evidence" value="ECO:0007669"/>
    <property type="project" value="UniProtKB-SubCell"/>
</dbReference>
<dbReference type="GO" id="GO:0032982">
    <property type="term" value="C:myosin filament"/>
    <property type="evidence" value="ECO:0007669"/>
    <property type="project" value="UniProtKB-KW"/>
</dbReference>
<dbReference type="GO" id="GO:0051015">
    <property type="term" value="F:actin filament binding"/>
    <property type="evidence" value="ECO:0007669"/>
    <property type="project" value="InterPro"/>
</dbReference>
<dbReference type="GO" id="GO:0005524">
    <property type="term" value="F:ATP binding"/>
    <property type="evidence" value="ECO:0007669"/>
    <property type="project" value="UniProtKB-KW"/>
</dbReference>
<dbReference type="GO" id="GO:0005516">
    <property type="term" value="F:calmodulin binding"/>
    <property type="evidence" value="ECO:0007669"/>
    <property type="project" value="UniProtKB-KW"/>
</dbReference>
<dbReference type="GO" id="GO:0003774">
    <property type="term" value="F:cytoskeletal motor activity"/>
    <property type="evidence" value="ECO:0007669"/>
    <property type="project" value="InterPro"/>
</dbReference>
<dbReference type="GO" id="GO:0003725">
    <property type="term" value="F:double-stranded RNA binding"/>
    <property type="evidence" value="ECO:0000266"/>
    <property type="project" value="MGI"/>
</dbReference>
<dbReference type="GO" id="GO:0006936">
    <property type="term" value="P:muscle contraction"/>
    <property type="evidence" value="ECO:0007669"/>
    <property type="project" value="Ensembl"/>
</dbReference>
<dbReference type="GO" id="GO:0014850">
    <property type="term" value="P:response to muscle activity"/>
    <property type="evidence" value="ECO:0000314"/>
    <property type="project" value="MGI"/>
</dbReference>
<dbReference type="CDD" id="cd14915">
    <property type="entry name" value="MYSc_Myh4"/>
    <property type="match status" value="1"/>
</dbReference>
<dbReference type="FunFam" id="1.10.10.820:FF:000001">
    <property type="entry name" value="Myosin heavy chain"/>
    <property type="match status" value="1"/>
</dbReference>
<dbReference type="FunFam" id="1.20.5.340:FF:000002">
    <property type="entry name" value="Myosin heavy chain"/>
    <property type="match status" value="1"/>
</dbReference>
<dbReference type="FunFam" id="1.20.5.340:FF:000003">
    <property type="entry name" value="Myosin heavy chain"/>
    <property type="match status" value="1"/>
</dbReference>
<dbReference type="FunFam" id="1.20.5.340:FF:000004">
    <property type="entry name" value="Myosin heavy chain"/>
    <property type="match status" value="1"/>
</dbReference>
<dbReference type="FunFam" id="1.20.5.340:FF:000006">
    <property type="entry name" value="Myosin heavy chain"/>
    <property type="match status" value="1"/>
</dbReference>
<dbReference type="FunFam" id="1.20.5.340:FF:000013">
    <property type="entry name" value="Myosin heavy chain"/>
    <property type="match status" value="1"/>
</dbReference>
<dbReference type="FunFam" id="1.20.5.370:FF:000001">
    <property type="entry name" value="Myosin heavy chain"/>
    <property type="match status" value="1"/>
</dbReference>
<dbReference type="FunFam" id="1.20.5.370:FF:000002">
    <property type="entry name" value="Myosin heavy chain"/>
    <property type="match status" value="1"/>
</dbReference>
<dbReference type="FunFam" id="1.20.5.370:FF:000003">
    <property type="entry name" value="Myosin heavy chain"/>
    <property type="match status" value="1"/>
</dbReference>
<dbReference type="FunFam" id="1.20.5.370:FF:000007">
    <property type="entry name" value="Myosin heavy chain"/>
    <property type="match status" value="1"/>
</dbReference>
<dbReference type="FunFam" id="1.20.5.370:FF:000008">
    <property type="entry name" value="Myosin heavy chain"/>
    <property type="match status" value="1"/>
</dbReference>
<dbReference type="FunFam" id="1.20.5.4820:FF:000001">
    <property type="entry name" value="Myosin heavy chain"/>
    <property type="match status" value="1"/>
</dbReference>
<dbReference type="FunFam" id="1.20.58.530:FF:000001">
    <property type="entry name" value="Myosin heavy chain"/>
    <property type="match status" value="1"/>
</dbReference>
<dbReference type="FunFam" id="2.30.30.360:FF:000001">
    <property type="entry name" value="Myosin heavy chain"/>
    <property type="match status" value="1"/>
</dbReference>
<dbReference type="FunFam" id="3.40.850.10:FF:000024">
    <property type="entry name" value="Myosin heavy chain, isoform J"/>
    <property type="match status" value="1"/>
</dbReference>
<dbReference type="FunFam" id="1.20.120.720:FF:000001">
    <property type="entry name" value="Myosin heavy chain, muscle"/>
    <property type="match status" value="1"/>
</dbReference>
<dbReference type="Gene3D" id="1.10.10.820">
    <property type="match status" value="1"/>
</dbReference>
<dbReference type="Gene3D" id="1.20.5.340">
    <property type="match status" value="5"/>
</dbReference>
<dbReference type="Gene3D" id="1.20.5.370">
    <property type="match status" value="4"/>
</dbReference>
<dbReference type="Gene3D" id="1.20.5.4820">
    <property type="match status" value="1"/>
</dbReference>
<dbReference type="Gene3D" id="1.20.58.530">
    <property type="match status" value="1"/>
</dbReference>
<dbReference type="Gene3D" id="6.10.250.2420">
    <property type="match status" value="1"/>
</dbReference>
<dbReference type="Gene3D" id="3.40.850.10">
    <property type="entry name" value="Kinesin motor domain"/>
    <property type="match status" value="1"/>
</dbReference>
<dbReference type="Gene3D" id="2.30.30.360">
    <property type="entry name" value="Myosin S1 fragment, N-terminal"/>
    <property type="match status" value="1"/>
</dbReference>
<dbReference type="Gene3D" id="1.20.120.720">
    <property type="entry name" value="Myosin VI head, motor domain, U50 subdomain"/>
    <property type="match status" value="1"/>
</dbReference>
<dbReference type="InterPro" id="IPR036961">
    <property type="entry name" value="Kinesin_motor_dom_sf"/>
</dbReference>
<dbReference type="InterPro" id="IPR001609">
    <property type="entry name" value="Myosin_head_motor_dom-like"/>
</dbReference>
<dbReference type="InterPro" id="IPR004009">
    <property type="entry name" value="Myosin_N"/>
</dbReference>
<dbReference type="InterPro" id="IPR008989">
    <property type="entry name" value="Myosin_S1_N"/>
</dbReference>
<dbReference type="InterPro" id="IPR002928">
    <property type="entry name" value="Myosin_tail"/>
</dbReference>
<dbReference type="InterPro" id="IPR027417">
    <property type="entry name" value="P-loop_NTPase"/>
</dbReference>
<dbReference type="InterPro" id="IPR014751">
    <property type="entry name" value="XRCC4-like_C"/>
</dbReference>
<dbReference type="PANTHER" id="PTHR45615">
    <property type="entry name" value="MYOSIN HEAVY CHAIN, NON-MUSCLE"/>
    <property type="match status" value="1"/>
</dbReference>
<dbReference type="PANTHER" id="PTHR45615:SF79">
    <property type="entry name" value="MYOSIN-4"/>
    <property type="match status" value="1"/>
</dbReference>
<dbReference type="Pfam" id="PF00063">
    <property type="entry name" value="Myosin_head"/>
    <property type="match status" value="1"/>
</dbReference>
<dbReference type="Pfam" id="PF02736">
    <property type="entry name" value="Myosin_N"/>
    <property type="match status" value="1"/>
</dbReference>
<dbReference type="Pfam" id="PF01576">
    <property type="entry name" value="Myosin_tail_1"/>
    <property type="match status" value="1"/>
</dbReference>
<dbReference type="PRINTS" id="PR00193">
    <property type="entry name" value="MYOSINHEAVY"/>
</dbReference>
<dbReference type="SMART" id="SM00242">
    <property type="entry name" value="MYSc"/>
    <property type="match status" value="1"/>
</dbReference>
<dbReference type="SUPFAM" id="SSF90257">
    <property type="entry name" value="Myosin rod fragments"/>
    <property type="match status" value="5"/>
</dbReference>
<dbReference type="SUPFAM" id="SSF52540">
    <property type="entry name" value="P-loop containing nucleoside triphosphate hydrolases"/>
    <property type="match status" value="1"/>
</dbReference>
<dbReference type="SUPFAM" id="SSF57997">
    <property type="entry name" value="Tropomyosin"/>
    <property type="match status" value="1"/>
</dbReference>
<dbReference type="PROSITE" id="PS50096">
    <property type="entry name" value="IQ"/>
    <property type="match status" value="1"/>
</dbReference>
<dbReference type="PROSITE" id="PS51456">
    <property type="entry name" value="MYOSIN_MOTOR"/>
    <property type="match status" value="1"/>
</dbReference>
<dbReference type="PROSITE" id="PS51844">
    <property type="entry name" value="SH3_LIKE"/>
    <property type="match status" value="1"/>
</dbReference>
<name>MYH4_MOUSE</name>
<feature type="chain" id="PRO_0000123399" description="Myosin-4">
    <location>
        <begin position="1"/>
        <end position="1939"/>
    </location>
</feature>
<feature type="domain" description="Myosin N-terminal SH3-like" evidence="7">
    <location>
        <begin position="33"/>
        <end position="82"/>
    </location>
</feature>
<feature type="domain" description="Myosin motor" evidence="6">
    <location>
        <begin position="86"/>
        <end position="782"/>
    </location>
</feature>
<feature type="domain" description="IQ" evidence="5">
    <location>
        <begin position="785"/>
        <end position="814"/>
    </location>
</feature>
<feature type="region of interest" description="Actin-binding" evidence="1">
    <location>
        <begin position="659"/>
        <end position="681"/>
    </location>
</feature>
<feature type="region of interest" description="Actin-binding" evidence="1">
    <location>
        <begin position="761"/>
        <end position="775"/>
    </location>
</feature>
<feature type="region of interest" description="Disordered" evidence="8">
    <location>
        <begin position="1128"/>
        <end position="1147"/>
    </location>
</feature>
<feature type="region of interest" description="Disordered" evidence="8">
    <location>
        <begin position="1153"/>
        <end position="1172"/>
    </location>
</feature>
<feature type="region of interest" description="Disordered" evidence="8">
    <location>
        <begin position="1276"/>
        <end position="1299"/>
    </location>
</feature>
<feature type="coiled-coil region" evidence="4">
    <location>
        <begin position="843"/>
        <end position="1939"/>
    </location>
</feature>
<feature type="compositionally biased region" description="Basic and acidic residues" evidence="8">
    <location>
        <begin position="1284"/>
        <end position="1299"/>
    </location>
</feature>
<feature type="binding site" evidence="4">
    <location>
        <begin position="179"/>
        <end position="186"/>
    </location>
    <ligand>
        <name>ATP</name>
        <dbReference type="ChEBI" id="CHEBI:30616"/>
    </ligand>
</feature>
<feature type="modified residue" description="Phosphoserine" evidence="3">
    <location>
        <position position="36"/>
    </location>
</feature>
<feature type="modified residue" description="Phosphothreonine" evidence="3">
    <location>
        <position position="64"/>
    </location>
</feature>
<feature type="modified residue" description="Phosphothreonine" evidence="3">
    <location>
        <position position="69"/>
    </location>
</feature>
<feature type="modified residue" description="Phosphoserine" evidence="3">
    <location>
        <position position="79"/>
    </location>
</feature>
<feature type="modified residue" description="N6,N6,N6-trimethyllysine" evidence="4">
    <location>
        <position position="130"/>
    </location>
</feature>
<feature type="modified residue" description="Phosphotyrosine" evidence="3">
    <location>
        <position position="389"/>
    </location>
</feature>
<feature type="modified residue" description="Phosphothreonine" evidence="3">
    <location>
        <position position="391"/>
    </location>
</feature>
<feature type="modified residue" description="Phosphoserine" evidence="3">
    <location>
        <position position="392"/>
    </location>
</feature>
<feature type="modified residue" description="Phosphothreonine" evidence="3">
    <location>
        <position position="419"/>
    </location>
</feature>
<feature type="modified residue" description="Phosphotyrosine" evidence="3">
    <location>
        <position position="424"/>
    </location>
</feature>
<feature type="modified residue" description="Phosphoserine" evidence="3">
    <location>
        <position position="625"/>
    </location>
</feature>
<feature type="modified residue" description="Pros-methylhistidine" evidence="2">
    <location>
        <position position="757"/>
    </location>
</feature>
<feature type="modified residue" description="Phosphothreonine" evidence="3">
    <location>
        <position position="776"/>
    </location>
</feature>
<feature type="modified residue" description="Phosphoserine" evidence="3">
    <location>
        <position position="1092"/>
    </location>
</feature>
<feature type="modified residue" description="Phosphoserine" evidence="3">
    <location>
        <position position="1096"/>
    </location>
</feature>
<feature type="modified residue" description="Phosphoserine" evidence="3">
    <location>
        <position position="1162"/>
    </location>
</feature>
<feature type="modified residue" description="Phosphoserine" evidence="3">
    <location>
        <position position="1237"/>
    </location>
</feature>
<feature type="modified residue" description="Phosphothreonine" evidence="3">
    <location>
        <position position="1241"/>
    </location>
</feature>
<feature type="modified residue" description="Phosphoserine" evidence="3">
    <location>
        <position position="1243"/>
    </location>
</feature>
<feature type="modified residue" description="Phosphothreonine" evidence="3">
    <location>
        <position position="1255"/>
    </location>
</feature>
<feature type="modified residue" description="Phosphoserine" evidence="3">
    <location>
        <position position="1261"/>
    </location>
</feature>
<feature type="modified residue" description="Phosphothreonine" evidence="3">
    <location>
        <position position="1265"/>
    </location>
</feature>
<feature type="modified residue" description="Phosphoserine" evidence="3">
    <location>
        <position position="1278"/>
    </location>
</feature>
<feature type="modified residue" description="Phosphothreonine" evidence="3">
    <location>
        <position position="1286"/>
    </location>
</feature>
<feature type="modified residue" description="Phosphoserine" evidence="3">
    <location>
        <position position="1288"/>
    </location>
</feature>
<feature type="modified residue" description="Phosphoserine" evidence="3">
    <location>
        <position position="1292"/>
    </location>
</feature>
<feature type="modified residue" description="Phosphoserine" evidence="3">
    <location>
        <position position="1303"/>
    </location>
</feature>
<feature type="modified residue" description="Phosphoserine" evidence="3">
    <location>
        <position position="1306"/>
    </location>
</feature>
<feature type="modified residue" description="Phosphoserine" evidence="3">
    <location>
        <position position="1413"/>
    </location>
</feature>
<feature type="modified residue" description="Phosphotyrosine" evidence="3">
    <location>
        <position position="1464"/>
    </location>
</feature>
<feature type="modified residue" description="Phosphothreonine" evidence="3">
    <location>
        <position position="1467"/>
    </location>
</feature>
<feature type="modified residue" description="Phosphoserine" evidence="3">
    <location>
        <position position="1474"/>
    </location>
</feature>
<feature type="modified residue" description="Phosphotyrosine" evidence="3">
    <location>
        <position position="1492"/>
    </location>
</feature>
<feature type="modified residue" description="Phosphoserine" evidence="3">
    <location>
        <position position="1495"/>
    </location>
</feature>
<feature type="modified residue" description="Phosphothreonine" evidence="3">
    <location>
        <position position="1501"/>
    </location>
</feature>
<feature type="modified residue" description="Phosphoserine" evidence="3">
    <location>
        <position position="1514"/>
    </location>
</feature>
<feature type="modified residue" description="Phosphothreonine" evidence="3">
    <location>
        <position position="1517"/>
    </location>
</feature>
<feature type="modified residue" description="Phosphoserine" evidence="3">
    <location>
        <position position="1542"/>
    </location>
</feature>
<feature type="modified residue" description="Phosphoserine" evidence="3">
    <location>
        <position position="1547"/>
    </location>
</feature>
<feature type="modified residue" description="Phosphoserine" evidence="3">
    <location>
        <position position="1554"/>
    </location>
</feature>
<feature type="modified residue" description="Phosphoserine" evidence="3">
    <location>
        <position position="1574"/>
    </location>
</feature>
<feature type="modified residue" description="Phosphoserine" evidence="3">
    <location>
        <position position="1600"/>
    </location>
</feature>
<feature type="modified residue" description="Phosphoserine" evidence="3">
    <location>
        <position position="1603"/>
    </location>
</feature>
<feature type="modified residue" description="Phosphoserine" evidence="3">
    <location>
        <position position="1714"/>
    </location>
</feature>
<feature type="modified residue" description="Phosphoserine" evidence="3">
    <location>
        <position position="1726"/>
    </location>
</feature>
<feature type="modified residue" description="Phosphothreonine" evidence="3">
    <location>
        <position position="1730"/>
    </location>
</feature>
<feature type="modified residue" description="Phosphothreonine" evidence="3">
    <location>
        <position position="1736"/>
    </location>
</feature>
<feature type="modified residue" description="Phosphoserine" evidence="3">
    <location>
        <position position="1739"/>
    </location>
</feature>